<organism>
    <name type="scientific">Mus musculus</name>
    <name type="common">Mouse</name>
    <dbReference type="NCBI Taxonomy" id="10090"/>
    <lineage>
        <taxon>Eukaryota</taxon>
        <taxon>Metazoa</taxon>
        <taxon>Chordata</taxon>
        <taxon>Craniata</taxon>
        <taxon>Vertebrata</taxon>
        <taxon>Euteleostomi</taxon>
        <taxon>Mammalia</taxon>
        <taxon>Eutheria</taxon>
        <taxon>Euarchontoglires</taxon>
        <taxon>Glires</taxon>
        <taxon>Rodentia</taxon>
        <taxon>Myomorpha</taxon>
        <taxon>Muroidea</taxon>
        <taxon>Muridae</taxon>
        <taxon>Murinae</taxon>
        <taxon>Mus</taxon>
        <taxon>Mus</taxon>
    </lineage>
</organism>
<keyword id="KW-1015">Disulfide bond</keyword>
<keyword id="KW-0256">Endoplasmic reticulum</keyword>
<keyword id="KW-0325">Glycoprotein</keyword>
<keyword id="KW-0333">Golgi apparatus</keyword>
<keyword id="KW-0430">Lectin</keyword>
<keyword id="KW-0472">Membrane</keyword>
<keyword id="KW-0479">Metal-binding</keyword>
<keyword id="KW-1185">Reference proteome</keyword>
<keyword id="KW-0732">Signal</keyword>
<keyword id="KW-0812">Transmembrane</keyword>
<keyword id="KW-1133">Transmembrane helix</keyword>
<protein>
    <recommendedName>
        <fullName>VIP36-like protein</fullName>
    </recommendedName>
    <alternativeName>
        <fullName>Lectin mannose-binding 2-like</fullName>
        <shortName>LMAN2-like protein</shortName>
    </alternativeName>
</protein>
<reference key="1">
    <citation type="journal article" date="2005" name="Science">
        <title>The transcriptional landscape of the mammalian genome.</title>
        <authorList>
            <person name="Carninci P."/>
            <person name="Kasukawa T."/>
            <person name="Katayama S."/>
            <person name="Gough J."/>
            <person name="Frith M.C."/>
            <person name="Maeda N."/>
            <person name="Oyama R."/>
            <person name="Ravasi T."/>
            <person name="Lenhard B."/>
            <person name="Wells C."/>
            <person name="Kodzius R."/>
            <person name="Shimokawa K."/>
            <person name="Bajic V.B."/>
            <person name="Brenner S.E."/>
            <person name="Batalov S."/>
            <person name="Forrest A.R."/>
            <person name="Zavolan M."/>
            <person name="Davis M.J."/>
            <person name="Wilming L.G."/>
            <person name="Aidinis V."/>
            <person name="Allen J.E."/>
            <person name="Ambesi-Impiombato A."/>
            <person name="Apweiler R."/>
            <person name="Aturaliya R.N."/>
            <person name="Bailey T.L."/>
            <person name="Bansal M."/>
            <person name="Baxter L."/>
            <person name="Beisel K.W."/>
            <person name="Bersano T."/>
            <person name="Bono H."/>
            <person name="Chalk A.M."/>
            <person name="Chiu K.P."/>
            <person name="Choudhary V."/>
            <person name="Christoffels A."/>
            <person name="Clutterbuck D.R."/>
            <person name="Crowe M.L."/>
            <person name="Dalla E."/>
            <person name="Dalrymple B.P."/>
            <person name="de Bono B."/>
            <person name="Della Gatta G."/>
            <person name="di Bernardo D."/>
            <person name="Down T."/>
            <person name="Engstrom P."/>
            <person name="Fagiolini M."/>
            <person name="Faulkner G."/>
            <person name="Fletcher C.F."/>
            <person name="Fukushima T."/>
            <person name="Furuno M."/>
            <person name="Futaki S."/>
            <person name="Gariboldi M."/>
            <person name="Georgii-Hemming P."/>
            <person name="Gingeras T.R."/>
            <person name="Gojobori T."/>
            <person name="Green R.E."/>
            <person name="Gustincich S."/>
            <person name="Harbers M."/>
            <person name="Hayashi Y."/>
            <person name="Hensch T.K."/>
            <person name="Hirokawa N."/>
            <person name="Hill D."/>
            <person name="Huminiecki L."/>
            <person name="Iacono M."/>
            <person name="Ikeo K."/>
            <person name="Iwama A."/>
            <person name="Ishikawa T."/>
            <person name="Jakt M."/>
            <person name="Kanapin A."/>
            <person name="Katoh M."/>
            <person name="Kawasawa Y."/>
            <person name="Kelso J."/>
            <person name="Kitamura H."/>
            <person name="Kitano H."/>
            <person name="Kollias G."/>
            <person name="Krishnan S.P."/>
            <person name="Kruger A."/>
            <person name="Kummerfeld S.K."/>
            <person name="Kurochkin I.V."/>
            <person name="Lareau L.F."/>
            <person name="Lazarevic D."/>
            <person name="Lipovich L."/>
            <person name="Liu J."/>
            <person name="Liuni S."/>
            <person name="McWilliam S."/>
            <person name="Madan Babu M."/>
            <person name="Madera M."/>
            <person name="Marchionni L."/>
            <person name="Matsuda H."/>
            <person name="Matsuzawa S."/>
            <person name="Miki H."/>
            <person name="Mignone F."/>
            <person name="Miyake S."/>
            <person name="Morris K."/>
            <person name="Mottagui-Tabar S."/>
            <person name="Mulder N."/>
            <person name="Nakano N."/>
            <person name="Nakauchi H."/>
            <person name="Ng P."/>
            <person name="Nilsson R."/>
            <person name="Nishiguchi S."/>
            <person name="Nishikawa S."/>
            <person name="Nori F."/>
            <person name="Ohara O."/>
            <person name="Okazaki Y."/>
            <person name="Orlando V."/>
            <person name="Pang K.C."/>
            <person name="Pavan W.J."/>
            <person name="Pavesi G."/>
            <person name="Pesole G."/>
            <person name="Petrovsky N."/>
            <person name="Piazza S."/>
            <person name="Reed J."/>
            <person name="Reid J.F."/>
            <person name="Ring B.Z."/>
            <person name="Ringwald M."/>
            <person name="Rost B."/>
            <person name="Ruan Y."/>
            <person name="Salzberg S.L."/>
            <person name="Sandelin A."/>
            <person name="Schneider C."/>
            <person name="Schoenbach C."/>
            <person name="Sekiguchi K."/>
            <person name="Semple C.A."/>
            <person name="Seno S."/>
            <person name="Sessa L."/>
            <person name="Sheng Y."/>
            <person name="Shibata Y."/>
            <person name="Shimada H."/>
            <person name="Shimada K."/>
            <person name="Silva D."/>
            <person name="Sinclair B."/>
            <person name="Sperling S."/>
            <person name="Stupka E."/>
            <person name="Sugiura K."/>
            <person name="Sultana R."/>
            <person name="Takenaka Y."/>
            <person name="Taki K."/>
            <person name="Tammoja K."/>
            <person name="Tan S.L."/>
            <person name="Tang S."/>
            <person name="Taylor M.S."/>
            <person name="Tegner J."/>
            <person name="Teichmann S.A."/>
            <person name="Ueda H.R."/>
            <person name="van Nimwegen E."/>
            <person name="Verardo R."/>
            <person name="Wei C.L."/>
            <person name="Yagi K."/>
            <person name="Yamanishi H."/>
            <person name="Zabarovsky E."/>
            <person name="Zhu S."/>
            <person name="Zimmer A."/>
            <person name="Hide W."/>
            <person name="Bult C."/>
            <person name="Grimmond S.M."/>
            <person name="Teasdale R.D."/>
            <person name="Liu E.T."/>
            <person name="Brusic V."/>
            <person name="Quackenbush J."/>
            <person name="Wahlestedt C."/>
            <person name="Mattick J.S."/>
            <person name="Hume D.A."/>
            <person name="Kai C."/>
            <person name="Sasaki D."/>
            <person name="Tomaru Y."/>
            <person name="Fukuda S."/>
            <person name="Kanamori-Katayama M."/>
            <person name="Suzuki M."/>
            <person name="Aoki J."/>
            <person name="Arakawa T."/>
            <person name="Iida J."/>
            <person name="Imamura K."/>
            <person name="Itoh M."/>
            <person name="Kato T."/>
            <person name="Kawaji H."/>
            <person name="Kawagashira N."/>
            <person name="Kawashima T."/>
            <person name="Kojima M."/>
            <person name="Kondo S."/>
            <person name="Konno H."/>
            <person name="Nakano K."/>
            <person name="Ninomiya N."/>
            <person name="Nishio T."/>
            <person name="Okada M."/>
            <person name="Plessy C."/>
            <person name="Shibata K."/>
            <person name="Shiraki T."/>
            <person name="Suzuki S."/>
            <person name="Tagami M."/>
            <person name="Waki K."/>
            <person name="Watahiki A."/>
            <person name="Okamura-Oho Y."/>
            <person name="Suzuki H."/>
            <person name="Kawai J."/>
            <person name="Hayashizaki Y."/>
        </authorList>
    </citation>
    <scope>NUCLEOTIDE SEQUENCE [LARGE SCALE MRNA]</scope>
    <source>
        <strain>C57BL/6J</strain>
        <tissue>Inner ear</tissue>
    </source>
</reference>
<reference key="2">
    <citation type="journal article" date="2004" name="Genome Res.">
        <title>The status, quality, and expansion of the NIH full-length cDNA project: the Mammalian Gene Collection (MGC).</title>
        <authorList>
            <consortium name="The MGC Project Team"/>
        </authorList>
    </citation>
    <scope>NUCLEOTIDE SEQUENCE [LARGE SCALE MRNA]</scope>
    <source>
        <strain>C57BL/6J</strain>
        <tissue>Olfactory epithelium</tissue>
    </source>
</reference>
<reference key="3">
    <citation type="journal article" date="2010" name="Cell">
        <title>A tissue-specific atlas of mouse protein phosphorylation and expression.</title>
        <authorList>
            <person name="Huttlin E.L."/>
            <person name="Jedrychowski M.P."/>
            <person name="Elias J.E."/>
            <person name="Goswami T."/>
            <person name="Rad R."/>
            <person name="Beausoleil S.A."/>
            <person name="Villen J."/>
            <person name="Haas W."/>
            <person name="Sowa M.E."/>
            <person name="Gygi S.P."/>
        </authorList>
    </citation>
    <scope>IDENTIFICATION BY MASS SPECTROMETRY [LARGE SCALE ANALYSIS]</scope>
    <source>
        <tissue>Pancreas</tissue>
    </source>
</reference>
<gene>
    <name type="primary">Lman2l</name>
    <name type="synonym">Vipl</name>
</gene>
<name>LMA2L_MOUSE</name>
<dbReference type="EMBL" id="AK158015">
    <property type="protein sequence ID" value="BAE34318.1"/>
    <property type="molecule type" value="mRNA"/>
</dbReference>
<dbReference type="EMBL" id="BC046969">
    <property type="protein sequence ID" value="AAH46969.1"/>
    <property type="molecule type" value="mRNA"/>
</dbReference>
<dbReference type="CCDS" id="CCDS14878.1"/>
<dbReference type="RefSeq" id="NP_001013392.1">
    <property type="nucleotide sequence ID" value="NM_001013374.2"/>
</dbReference>
<dbReference type="RefSeq" id="NP_001297446.1">
    <property type="nucleotide sequence ID" value="NM_001310517.1"/>
</dbReference>
<dbReference type="SMR" id="P59481"/>
<dbReference type="BioGRID" id="229570">
    <property type="interactions" value="17"/>
</dbReference>
<dbReference type="FunCoup" id="P59481">
    <property type="interactions" value="2676"/>
</dbReference>
<dbReference type="STRING" id="10090.ENSMUSP00000110663"/>
<dbReference type="GlyConnect" id="2820">
    <property type="glycosylation" value="6 N-Linked glycans (1 site)"/>
</dbReference>
<dbReference type="GlyCosmos" id="P59481">
    <property type="glycosylation" value="1 site, 6 glycans"/>
</dbReference>
<dbReference type="GlyGen" id="P59481">
    <property type="glycosylation" value="2 sites, 7 N-linked glycans (1 site)"/>
</dbReference>
<dbReference type="iPTMnet" id="P59481"/>
<dbReference type="PhosphoSitePlus" id="P59481"/>
<dbReference type="SwissPalm" id="P59481"/>
<dbReference type="PaxDb" id="10090-ENSMUSP00000117200"/>
<dbReference type="PeptideAtlas" id="P59481"/>
<dbReference type="ProteomicsDB" id="290040"/>
<dbReference type="Pumba" id="P59481"/>
<dbReference type="Antibodypedia" id="17473">
    <property type="antibodies" value="59 antibodies from 18 providers"/>
</dbReference>
<dbReference type="DNASU" id="214895"/>
<dbReference type="Ensembl" id="ENSMUST00000125304.8">
    <property type="protein sequence ID" value="ENSMUSP00000117200.2"/>
    <property type="gene ID" value="ENSMUSG00000001143.14"/>
</dbReference>
<dbReference type="GeneID" id="214895"/>
<dbReference type="KEGG" id="mmu:214895"/>
<dbReference type="UCSC" id="uc007aqc.1">
    <property type="organism name" value="mouse"/>
</dbReference>
<dbReference type="AGR" id="MGI:2443010"/>
<dbReference type="CTD" id="81562"/>
<dbReference type="MGI" id="MGI:2443010">
    <property type="gene designation" value="Lman2l"/>
</dbReference>
<dbReference type="VEuPathDB" id="HostDB:ENSMUSG00000001143"/>
<dbReference type="eggNOG" id="KOG3839">
    <property type="taxonomic scope" value="Eukaryota"/>
</dbReference>
<dbReference type="GeneTree" id="ENSGT00940000155596"/>
<dbReference type="InParanoid" id="P59481"/>
<dbReference type="OrthoDB" id="270293at2759"/>
<dbReference type="PhylomeDB" id="P59481"/>
<dbReference type="TreeFam" id="TF313311"/>
<dbReference type="Reactome" id="R-MMU-204005">
    <property type="pathway name" value="COPII-mediated vesicle transport"/>
</dbReference>
<dbReference type="Reactome" id="R-MMU-5694530">
    <property type="pathway name" value="Cargo concentration in the ER"/>
</dbReference>
<dbReference type="BioGRID-ORCS" id="214895">
    <property type="hits" value="1 hit in 77 CRISPR screens"/>
</dbReference>
<dbReference type="ChiTaRS" id="Lman2l">
    <property type="organism name" value="mouse"/>
</dbReference>
<dbReference type="PRO" id="PR:P59481"/>
<dbReference type="Proteomes" id="UP000000589">
    <property type="component" value="Chromosome 1"/>
</dbReference>
<dbReference type="RNAct" id="P59481">
    <property type="molecule type" value="protein"/>
</dbReference>
<dbReference type="Bgee" id="ENSMUSG00000001143">
    <property type="expression patterns" value="Expressed in otolith organ and 230 other cell types or tissues"/>
</dbReference>
<dbReference type="ExpressionAtlas" id="P59481">
    <property type="expression patterns" value="baseline and differential"/>
</dbReference>
<dbReference type="GO" id="GO:0005789">
    <property type="term" value="C:endoplasmic reticulum membrane"/>
    <property type="evidence" value="ECO:0000250"/>
    <property type="project" value="UniProtKB"/>
</dbReference>
<dbReference type="GO" id="GO:0005794">
    <property type="term" value="C:Golgi apparatus"/>
    <property type="evidence" value="ECO:0000250"/>
    <property type="project" value="UniProtKB"/>
</dbReference>
<dbReference type="GO" id="GO:0000139">
    <property type="term" value="C:Golgi membrane"/>
    <property type="evidence" value="ECO:0007669"/>
    <property type="project" value="UniProtKB-SubCell"/>
</dbReference>
<dbReference type="GO" id="GO:0030246">
    <property type="term" value="F:carbohydrate binding"/>
    <property type="evidence" value="ECO:0007669"/>
    <property type="project" value="UniProtKB-KW"/>
</dbReference>
<dbReference type="GO" id="GO:0046872">
    <property type="term" value="F:metal ion binding"/>
    <property type="evidence" value="ECO:0007669"/>
    <property type="project" value="UniProtKB-KW"/>
</dbReference>
<dbReference type="GO" id="GO:0015031">
    <property type="term" value="P:protein transport"/>
    <property type="evidence" value="ECO:0000250"/>
    <property type="project" value="UniProtKB"/>
</dbReference>
<dbReference type="FunFam" id="2.60.120.200:FF:000017">
    <property type="entry name" value="Vesicular integral-membrane protein VIP36"/>
    <property type="match status" value="1"/>
</dbReference>
<dbReference type="Gene3D" id="2.60.120.200">
    <property type="match status" value="1"/>
</dbReference>
<dbReference type="InterPro" id="IPR013320">
    <property type="entry name" value="ConA-like_dom_sf"/>
</dbReference>
<dbReference type="InterPro" id="IPR051136">
    <property type="entry name" value="Intracellular_Lectin-GPT"/>
</dbReference>
<dbReference type="InterPro" id="IPR005052">
    <property type="entry name" value="Lectin_leg"/>
</dbReference>
<dbReference type="PANTHER" id="PTHR12223">
    <property type="entry name" value="VESICULAR MANNOSE-BINDING LECTIN"/>
    <property type="match status" value="1"/>
</dbReference>
<dbReference type="PANTHER" id="PTHR12223:SF20">
    <property type="entry name" value="VIP36-LIKE PROTEIN"/>
    <property type="match status" value="1"/>
</dbReference>
<dbReference type="Pfam" id="PF03388">
    <property type="entry name" value="Lectin_leg-like"/>
    <property type="match status" value="1"/>
</dbReference>
<dbReference type="SUPFAM" id="SSF49899">
    <property type="entry name" value="Concanavalin A-like lectins/glucanases"/>
    <property type="match status" value="1"/>
</dbReference>
<dbReference type="PROSITE" id="PS51328">
    <property type="entry name" value="L_LECTIN_LIKE"/>
    <property type="match status" value="1"/>
</dbReference>
<sequence length="347" mass="39881">MAAASRPSWWQRWRRRAWARDGAKLLLFLLLLGSGPGPRHVRAGQAVEYLKREHSLSKPYQGVGTSSSSLWNLMGNAMVMTQYIRLTPDMQSKQGALWNRVPCFLKDWELQVHFKIHGQGKKNLHGDGLAIWYTKDRMQPGPVFGNMDKFVGLGVFVDTYPNEEKQHERVFPYISAMVNNGSLSYDHERDGRPTELGGCTAIVRNIRYDTFLVIRYVKRHLTIMMDIDGKHEWRDCIEMPGVRLPRGYYFGTSSITGDLSDNHDVISLKLFELTGVRTPEEEKLHRDVFLPSVDNLKLPEMTVPPTPLSGLALFLIVFFSLVFSVFAIVIGIILYNKWQDQSRKRFY</sequence>
<evidence type="ECO:0000250" key="1"/>
<evidence type="ECO:0000250" key="2">
    <source>
        <dbReference type="UniProtKB" id="Q9H0V9"/>
    </source>
</evidence>
<evidence type="ECO:0000255" key="3"/>
<evidence type="ECO:0000255" key="4">
    <source>
        <dbReference type="PROSITE-ProRule" id="PRU00658"/>
    </source>
</evidence>
<evidence type="ECO:0000305" key="5"/>
<accession>P59481</accession>
<accession>Q3TZ91</accession>
<comment type="function">
    <text evidence="2">May be involved in the regulation of export from the endoplasmic reticulum of a subset of glycoproteins. May function as a regulator of ERGIC-53 (By similarity).</text>
</comment>
<comment type="subcellular location">
    <subcellularLocation>
        <location evidence="1">Endoplasmic reticulum membrane</location>
        <topology evidence="1">Single-pass type I membrane protein</topology>
    </subcellularLocation>
    <subcellularLocation>
        <location evidence="1">Golgi apparatus membrane</location>
        <topology evidence="1">Single-pass type I membrane protein</topology>
    </subcellularLocation>
    <text evidence="1">Predominantly found in the endoplasmic reticulum. Partly found in the Golgi.</text>
</comment>
<feature type="signal peptide" evidence="3">
    <location>
        <begin position="1"/>
        <end position="43"/>
    </location>
</feature>
<feature type="chain" id="PRO_0000017669" description="VIP36-like protein">
    <location>
        <begin position="44"/>
        <end position="347"/>
    </location>
</feature>
<feature type="topological domain" description="Lumenal" evidence="3">
    <location>
        <begin position="44"/>
        <end position="312"/>
    </location>
</feature>
<feature type="transmembrane region" description="Helical" evidence="3">
    <location>
        <begin position="313"/>
        <end position="335"/>
    </location>
</feature>
<feature type="topological domain" description="Cytoplasmic" evidence="3">
    <location>
        <begin position="336"/>
        <end position="347"/>
    </location>
</feature>
<feature type="domain" description="L-type lectin-like" evidence="4">
    <location>
        <begin position="48"/>
        <end position="273"/>
    </location>
</feature>
<feature type="short sequence motif" description="Endoplasmic reticulum retention signal" evidence="1">
    <location>
        <begin position="343"/>
        <end position="345"/>
    </location>
</feature>
<feature type="binding site" evidence="4">
    <location>
        <position position="92"/>
    </location>
    <ligand>
        <name>a carbohydrate</name>
        <dbReference type="ChEBI" id="CHEBI:16646"/>
    </ligand>
</feature>
<feature type="binding site" evidence="4">
    <location>
        <position position="127"/>
    </location>
    <ligand>
        <name>a carbohydrate</name>
        <dbReference type="ChEBI" id="CHEBI:16646"/>
    </ligand>
</feature>
<feature type="binding site" evidence="4">
    <location>
        <position position="158"/>
    </location>
    <ligand>
        <name>Ca(2+)</name>
        <dbReference type="ChEBI" id="CHEBI:29108"/>
    </ligand>
</feature>
<feature type="binding site" evidence="4">
    <location>
        <begin position="160"/>
        <end position="162"/>
    </location>
    <ligand>
        <name>a carbohydrate</name>
        <dbReference type="ChEBI" id="CHEBI:16646"/>
    </ligand>
</feature>
<feature type="binding site" evidence="4">
    <location>
        <position position="160"/>
    </location>
    <ligand>
        <name>Ca(2+)</name>
        <dbReference type="ChEBI" id="CHEBI:29108"/>
    </ligand>
</feature>
<feature type="binding site" evidence="4">
    <location>
        <position position="162"/>
    </location>
    <ligand>
        <name>Ca(2+)</name>
        <dbReference type="ChEBI" id="CHEBI:29108"/>
    </ligand>
</feature>
<feature type="binding site" evidence="4">
    <location>
        <position position="187"/>
    </location>
    <ligand>
        <name>a carbohydrate</name>
        <dbReference type="ChEBI" id="CHEBI:16646"/>
    </ligand>
</feature>
<feature type="binding site" evidence="4">
    <location>
        <position position="190"/>
    </location>
    <ligand>
        <name>Ca(2+)</name>
        <dbReference type="ChEBI" id="CHEBI:29108"/>
    </ligand>
</feature>
<feature type="binding site" evidence="4">
    <location>
        <begin position="257"/>
        <end position="259"/>
    </location>
    <ligand>
        <name>a carbohydrate</name>
        <dbReference type="ChEBI" id="CHEBI:16646"/>
    </ligand>
</feature>
<feature type="glycosylation site" description="N-linked (GlcNAc...) asparagine" evidence="1">
    <location>
        <position position="180"/>
    </location>
</feature>
<feature type="disulfide bond" evidence="4">
    <location>
        <begin position="199"/>
        <end position="236"/>
    </location>
</feature>
<feature type="sequence conflict" description="In Ref. 1; BAE34318." evidence="5" ref="1">
    <original>R</original>
    <variation>H</variation>
    <location>
        <position position="16"/>
    </location>
</feature>
<proteinExistence type="evidence at protein level"/>